<reference key="1">
    <citation type="journal article" date="2008" name="PLoS ONE">
        <title>Genome sequence of the saprophyte Leptospira biflexa provides insights into the evolution of Leptospira and the pathogenesis of leptospirosis.</title>
        <authorList>
            <person name="Picardeau M."/>
            <person name="Bulach D.M."/>
            <person name="Bouchier C."/>
            <person name="Zuerner R.L."/>
            <person name="Zidane N."/>
            <person name="Wilson P.J."/>
            <person name="Creno S."/>
            <person name="Kuczek E.S."/>
            <person name="Bommezzadri S."/>
            <person name="Davis J.C."/>
            <person name="McGrath A."/>
            <person name="Johnson M.J."/>
            <person name="Boursaux-Eude C."/>
            <person name="Seemann T."/>
            <person name="Rouy Z."/>
            <person name="Coppel R.L."/>
            <person name="Rood J.I."/>
            <person name="Lajus A."/>
            <person name="Davies J.K."/>
            <person name="Medigue C."/>
            <person name="Adler B."/>
        </authorList>
    </citation>
    <scope>NUCLEOTIDE SEQUENCE [LARGE SCALE GENOMIC DNA]</scope>
    <source>
        <strain>Patoc 1 / Ames</strain>
    </source>
</reference>
<gene>
    <name evidence="1" type="primary">glyA</name>
    <name type="ordered locus">LBF_0974</name>
</gene>
<comment type="function">
    <text evidence="1">Catalyzes the reversible interconversion of serine and glycine with tetrahydrofolate (THF) serving as the one-carbon carrier. This reaction serves as the major source of one-carbon groups required for the biosynthesis of purines, thymidylate, methionine, and other important biomolecules. Also exhibits THF-independent aldolase activity toward beta-hydroxyamino acids, producing glycine and aldehydes, via a retro-aldol mechanism.</text>
</comment>
<comment type="catalytic activity">
    <reaction evidence="1">
        <text>(6R)-5,10-methylene-5,6,7,8-tetrahydrofolate + glycine + H2O = (6S)-5,6,7,8-tetrahydrofolate + L-serine</text>
        <dbReference type="Rhea" id="RHEA:15481"/>
        <dbReference type="ChEBI" id="CHEBI:15377"/>
        <dbReference type="ChEBI" id="CHEBI:15636"/>
        <dbReference type="ChEBI" id="CHEBI:33384"/>
        <dbReference type="ChEBI" id="CHEBI:57305"/>
        <dbReference type="ChEBI" id="CHEBI:57453"/>
        <dbReference type="EC" id="2.1.2.1"/>
    </reaction>
</comment>
<comment type="cofactor">
    <cofactor evidence="1">
        <name>pyridoxal 5'-phosphate</name>
        <dbReference type="ChEBI" id="CHEBI:597326"/>
    </cofactor>
</comment>
<comment type="pathway">
    <text evidence="1">One-carbon metabolism; tetrahydrofolate interconversion.</text>
</comment>
<comment type="pathway">
    <text evidence="1">Amino-acid biosynthesis; glycine biosynthesis; glycine from L-serine: step 1/1.</text>
</comment>
<comment type="subunit">
    <text evidence="1">Homodimer.</text>
</comment>
<comment type="subcellular location">
    <subcellularLocation>
        <location evidence="1">Cytoplasm</location>
    </subcellularLocation>
</comment>
<comment type="similarity">
    <text evidence="1">Belongs to the SHMT family.</text>
</comment>
<feature type="chain" id="PRO_1000091553" description="Serine hydroxymethyltransferase">
    <location>
        <begin position="1"/>
        <end position="416"/>
    </location>
</feature>
<feature type="binding site" evidence="1">
    <location>
        <position position="117"/>
    </location>
    <ligand>
        <name>(6S)-5,6,7,8-tetrahydrofolate</name>
        <dbReference type="ChEBI" id="CHEBI:57453"/>
    </ligand>
</feature>
<feature type="binding site" evidence="1">
    <location>
        <begin position="121"/>
        <end position="123"/>
    </location>
    <ligand>
        <name>(6S)-5,6,7,8-tetrahydrofolate</name>
        <dbReference type="ChEBI" id="CHEBI:57453"/>
    </ligand>
</feature>
<feature type="site" description="Plays an important role in substrate specificity" evidence="1">
    <location>
        <position position="225"/>
    </location>
</feature>
<feature type="modified residue" description="N6-(pyridoxal phosphate)lysine" evidence="1">
    <location>
        <position position="226"/>
    </location>
</feature>
<dbReference type="EC" id="2.1.2.1" evidence="1"/>
<dbReference type="EMBL" id="CP000777">
    <property type="protein sequence ID" value="ABZ93501.1"/>
    <property type="molecule type" value="Genomic_DNA"/>
</dbReference>
<dbReference type="RefSeq" id="WP_012388012.1">
    <property type="nucleotide sequence ID" value="NC_010842.1"/>
</dbReference>
<dbReference type="SMR" id="B0SEF8"/>
<dbReference type="KEGG" id="lbf:LBF_0974"/>
<dbReference type="HOGENOM" id="CLU_022477_2_1_12"/>
<dbReference type="UniPathway" id="UPA00193"/>
<dbReference type="UniPathway" id="UPA00288">
    <property type="reaction ID" value="UER01023"/>
</dbReference>
<dbReference type="GO" id="GO:0005829">
    <property type="term" value="C:cytosol"/>
    <property type="evidence" value="ECO:0007669"/>
    <property type="project" value="TreeGrafter"/>
</dbReference>
<dbReference type="GO" id="GO:0004372">
    <property type="term" value="F:glycine hydroxymethyltransferase activity"/>
    <property type="evidence" value="ECO:0007669"/>
    <property type="project" value="UniProtKB-UniRule"/>
</dbReference>
<dbReference type="GO" id="GO:0030170">
    <property type="term" value="F:pyridoxal phosphate binding"/>
    <property type="evidence" value="ECO:0007669"/>
    <property type="project" value="UniProtKB-UniRule"/>
</dbReference>
<dbReference type="GO" id="GO:0019264">
    <property type="term" value="P:glycine biosynthetic process from serine"/>
    <property type="evidence" value="ECO:0007669"/>
    <property type="project" value="UniProtKB-UniRule"/>
</dbReference>
<dbReference type="GO" id="GO:0035999">
    <property type="term" value="P:tetrahydrofolate interconversion"/>
    <property type="evidence" value="ECO:0007669"/>
    <property type="project" value="UniProtKB-UniRule"/>
</dbReference>
<dbReference type="CDD" id="cd00378">
    <property type="entry name" value="SHMT"/>
    <property type="match status" value="1"/>
</dbReference>
<dbReference type="FunFam" id="3.40.640.10:FF:000001">
    <property type="entry name" value="Serine hydroxymethyltransferase"/>
    <property type="match status" value="1"/>
</dbReference>
<dbReference type="FunFam" id="3.90.1150.10:FF:000003">
    <property type="entry name" value="Serine hydroxymethyltransferase"/>
    <property type="match status" value="1"/>
</dbReference>
<dbReference type="Gene3D" id="3.90.1150.10">
    <property type="entry name" value="Aspartate Aminotransferase, domain 1"/>
    <property type="match status" value="1"/>
</dbReference>
<dbReference type="Gene3D" id="3.40.640.10">
    <property type="entry name" value="Type I PLP-dependent aspartate aminotransferase-like (Major domain)"/>
    <property type="match status" value="1"/>
</dbReference>
<dbReference type="HAMAP" id="MF_00051">
    <property type="entry name" value="SHMT"/>
    <property type="match status" value="1"/>
</dbReference>
<dbReference type="InterPro" id="IPR015424">
    <property type="entry name" value="PyrdxlP-dep_Trfase"/>
</dbReference>
<dbReference type="InterPro" id="IPR015421">
    <property type="entry name" value="PyrdxlP-dep_Trfase_major"/>
</dbReference>
<dbReference type="InterPro" id="IPR015422">
    <property type="entry name" value="PyrdxlP-dep_Trfase_small"/>
</dbReference>
<dbReference type="InterPro" id="IPR001085">
    <property type="entry name" value="Ser_HO-MeTrfase"/>
</dbReference>
<dbReference type="InterPro" id="IPR049943">
    <property type="entry name" value="Ser_HO-MeTrfase-like"/>
</dbReference>
<dbReference type="InterPro" id="IPR019798">
    <property type="entry name" value="Ser_HO-MeTrfase_PLP_BS"/>
</dbReference>
<dbReference type="InterPro" id="IPR039429">
    <property type="entry name" value="SHMT-like_dom"/>
</dbReference>
<dbReference type="NCBIfam" id="NF000586">
    <property type="entry name" value="PRK00011.1"/>
    <property type="match status" value="1"/>
</dbReference>
<dbReference type="PANTHER" id="PTHR11680">
    <property type="entry name" value="SERINE HYDROXYMETHYLTRANSFERASE"/>
    <property type="match status" value="1"/>
</dbReference>
<dbReference type="PANTHER" id="PTHR11680:SF35">
    <property type="entry name" value="SERINE HYDROXYMETHYLTRANSFERASE 1"/>
    <property type="match status" value="1"/>
</dbReference>
<dbReference type="Pfam" id="PF00464">
    <property type="entry name" value="SHMT"/>
    <property type="match status" value="1"/>
</dbReference>
<dbReference type="PIRSF" id="PIRSF000412">
    <property type="entry name" value="SHMT"/>
    <property type="match status" value="1"/>
</dbReference>
<dbReference type="SUPFAM" id="SSF53383">
    <property type="entry name" value="PLP-dependent transferases"/>
    <property type="match status" value="1"/>
</dbReference>
<dbReference type="PROSITE" id="PS00096">
    <property type="entry name" value="SHMT"/>
    <property type="match status" value="1"/>
</dbReference>
<protein>
    <recommendedName>
        <fullName evidence="1">Serine hydroxymethyltransferase</fullName>
        <shortName evidence="1">SHMT</shortName>
        <shortName evidence="1">Serine methylase</shortName>
        <ecNumber evidence="1">2.1.2.1</ecNumber>
    </recommendedName>
</protein>
<keyword id="KW-0028">Amino-acid biosynthesis</keyword>
<keyword id="KW-0963">Cytoplasm</keyword>
<keyword id="KW-0554">One-carbon metabolism</keyword>
<keyword id="KW-0663">Pyridoxal phosphate</keyword>
<keyword id="KW-0808">Transferase</keyword>
<evidence type="ECO:0000255" key="1">
    <source>
        <dbReference type="HAMAP-Rule" id="MF_00051"/>
    </source>
</evidence>
<proteinExistence type="inferred from homology"/>
<accession>B0SEF8</accession>
<sequence>MSYLEKQDPEVYAALKKEDERQEHSLEMIASENFVSRPVLEAYHSTLTNKYAEGYPGKRYYNGCENADRVEELAIERAKKMFGAEYANVQPHSGAQANMAVFLATLEPGDSFLGMNLAHGGHLTHGSAVNISGKYFKPIPYGVDEKTETINYDEVAKLAKEHKPKLIVVGASAYPRVIDFNKFREIADGIGAKIMADIAHISGLVVAGEHPSPIGVCDFVTTTTHKTLRGPRGGLILSSSEHEKILNSRVFPGIQGGPLMHVIAAKAVAFGEALQPDFKTYIKQVVKNAKTLAEVFQKRGFRVVSGGTDNHIVLLDVSVKGLTGKDAADGLDHIGVTVNKNAIPFDKNPPAVASGIRLGTPALTTRGLKEKEIEAVGNLICDYLEHFGDTSFESKVKAAVKEITGAFPMNHFRLED</sequence>
<organism>
    <name type="scientific">Leptospira biflexa serovar Patoc (strain Patoc 1 / Ames)</name>
    <dbReference type="NCBI Taxonomy" id="355278"/>
    <lineage>
        <taxon>Bacteria</taxon>
        <taxon>Pseudomonadati</taxon>
        <taxon>Spirochaetota</taxon>
        <taxon>Spirochaetia</taxon>
        <taxon>Leptospirales</taxon>
        <taxon>Leptospiraceae</taxon>
        <taxon>Leptospira</taxon>
    </lineage>
</organism>
<name>GLYA_LEPBA</name>